<proteinExistence type="inferred from homology"/>
<protein>
    <recommendedName>
        <fullName evidence="3">Probable FAD-dependent monooxygenase</fullName>
        <ecNumber evidence="3">1.-.-.-</ecNumber>
    </recommendedName>
</protein>
<keyword id="KW-0274">FAD</keyword>
<keyword id="KW-0285">Flavoprotein</keyword>
<keyword id="KW-0325">Glycoprotein</keyword>
<keyword id="KW-0503">Monooxygenase</keyword>
<keyword id="KW-0560">Oxidoreductase</keyword>
<keyword id="KW-1185">Reference proteome</keyword>
<keyword id="KW-0732">Signal</keyword>
<name>A2462_ARTBC</name>
<sequence>MGSTSTPPHVLIIGAGITGLALAQALRKHGVSFAVYERDPDPLHRGKGWGLTIHWSLDAFLRLLPQHLIDRLPETYVDPDAVAKGENGNFLLFDLRTGETKWKVPPAKRLRVSRERLRRLLMDGIDVQWNKTISSISQISETAVRCEFSDNSSAEGTLLVGCDGSRSKTRSLLCSLAGNETPVRSENYQLPVRLIGVSAALPSRIALKMRALDPFFLQAGDPATSNFFWFSFLDTPINNDREDRDTYECQILISWPYRKDGSNNIEIPCHNVDKIKLMHSLADGWVEPFCEVVQSIPEETEPKIISLEDWPTPPKGSWSNLGGTATLVGDSAHAMTMFRGEAGNHGILDVSNLLEALIPVLTSSPHSPAKTQEEVINEYEDEMTTRTRPAVLRSRKACLDAHDYPSITADSPLVARRGAFEDDDLEYLLN</sequence>
<comment type="cofactor">
    <cofactor evidence="3">
        <name>FAD</name>
        <dbReference type="ChEBI" id="CHEBI:57692"/>
    </cofactor>
</comment>
<feature type="signal peptide" evidence="1">
    <location>
        <begin position="1"/>
        <end position="23"/>
    </location>
</feature>
<feature type="chain" id="PRO_0000434485" description="Probable FAD-dependent monooxygenase" evidence="1">
    <location>
        <begin position="24"/>
        <end position="430"/>
    </location>
</feature>
<feature type="binding site" evidence="1">
    <location>
        <begin position="9"/>
        <end position="37"/>
    </location>
    <ligand>
        <name>FAD</name>
        <dbReference type="ChEBI" id="CHEBI:57692"/>
    </ligand>
</feature>
<feature type="binding site" evidence="1">
    <location>
        <begin position="307"/>
        <end position="330"/>
    </location>
    <ligand>
        <name>FAD</name>
        <dbReference type="ChEBI" id="CHEBI:57692"/>
    </ligand>
</feature>
<feature type="glycosylation site" description="N-linked (GlcNAc...) asparagine" evidence="2">
    <location>
        <position position="130"/>
    </location>
</feature>
<feature type="glycosylation site" description="N-linked (GlcNAc...) asparagine" evidence="2">
    <location>
        <position position="151"/>
    </location>
</feature>
<organism>
    <name type="scientific">Arthroderma benhamiae (strain ATCC MYA-4681 / CBS 112371)</name>
    <name type="common">Trichophyton mentagrophytes</name>
    <dbReference type="NCBI Taxonomy" id="663331"/>
    <lineage>
        <taxon>Eukaryota</taxon>
        <taxon>Fungi</taxon>
        <taxon>Dikarya</taxon>
        <taxon>Ascomycota</taxon>
        <taxon>Pezizomycotina</taxon>
        <taxon>Eurotiomycetes</taxon>
        <taxon>Eurotiomycetidae</taxon>
        <taxon>Onygenales</taxon>
        <taxon>Arthrodermataceae</taxon>
        <taxon>Trichophyton</taxon>
    </lineage>
</organism>
<gene>
    <name type="ORF">ARB_02462</name>
</gene>
<reference key="1">
    <citation type="journal article" date="2011" name="Genome Biol.">
        <title>Comparative and functional genomics provide insights into the pathogenicity of dermatophytic fungi.</title>
        <authorList>
            <person name="Burmester A."/>
            <person name="Shelest E."/>
            <person name="Gloeckner G."/>
            <person name="Heddergott C."/>
            <person name="Schindler S."/>
            <person name="Staib P."/>
            <person name="Heidel A."/>
            <person name="Felder M."/>
            <person name="Petzold A."/>
            <person name="Szafranski K."/>
            <person name="Feuermann M."/>
            <person name="Pedruzzi I."/>
            <person name="Priebe S."/>
            <person name="Groth M."/>
            <person name="Winkler R."/>
            <person name="Li W."/>
            <person name="Kniemeyer O."/>
            <person name="Schroeckh V."/>
            <person name="Hertweck C."/>
            <person name="Hube B."/>
            <person name="White T.C."/>
            <person name="Platzer M."/>
            <person name="Guthke R."/>
            <person name="Heitman J."/>
            <person name="Woestemeyer J."/>
            <person name="Zipfel P.F."/>
            <person name="Monod M."/>
            <person name="Brakhage A.A."/>
        </authorList>
    </citation>
    <scope>NUCLEOTIDE SEQUENCE [LARGE SCALE GENOMIC DNA]</scope>
    <source>
        <strain>ATCC MYA-4681 / CBS 112371</strain>
    </source>
</reference>
<accession>D4B1Y1</accession>
<dbReference type="EC" id="1.-.-.-" evidence="3"/>
<dbReference type="EMBL" id="ABSU01000028">
    <property type="protein sequence ID" value="EFE30542.1"/>
    <property type="molecule type" value="Genomic_DNA"/>
</dbReference>
<dbReference type="RefSeq" id="XP_003011182.1">
    <property type="nucleotide sequence ID" value="XM_003011136.1"/>
</dbReference>
<dbReference type="SMR" id="D4B1Y1"/>
<dbReference type="STRING" id="663331.D4B1Y1"/>
<dbReference type="GeneID" id="9523839"/>
<dbReference type="KEGG" id="abe:ARB_02462"/>
<dbReference type="eggNOG" id="KOG2614">
    <property type="taxonomic scope" value="Eukaryota"/>
</dbReference>
<dbReference type="HOGENOM" id="CLU_009665_3_2_1"/>
<dbReference type="OMA" id="TAVRCEF"/>
<dbReference type="OrthoDB" id="47494at2759"/>
<dbReference type="Proteomes" id="UP000008866">
    <property type="component" value="Unassembled WGS sequence"/>
</dbReference>
<dbReference type="GO" id="GO:0071949">
    <property type="term" value="F:FAD binding"/>
    <property type="evidence" value="ECO:0007669"/>
    <property type="project" value="InterPro"/>
</dbReference>
<dbReference type="GO" id="GO:0004497">
    <property type="term" value="F:monooxygenase activity"/>
    <property type="evidence" value="ECO:0007669"/>
    <property type="project" value="UniProtKB-KW"/>
</dbReference>
<dbReference type="Gene3D" id="3.50.50.60">
    <property type="entry name" value="FAD/NAD(P)-binding domain"/>
    <property type="match status" value="1"/>
</dbReference>
<dbReference type="InterPro" id="IPR002938">
    <property type="entry name" value="FAD-bd"/>
</dbReference>
<dbReference type="InterPro" id="IPR036188">
    <property type="entry name" value="FAD/NAD-bd_sf"/>
</dbReference>
<dbReference type="PANTHER" id="PTHR47178:SF1">
    <property type="entry name" value="FAD-BINDING DOMAIN-CONTAINING PROTEIN-RELATED"/>
    <property type="match status" value="1"/>
</dbReference>
<dbReference type="PANTHER" id="PTHR47178">
    <property type="entry name" value="MONOOXYGENASE, FAD-BINDING"/>
    <property type="match status" value="1"/>
</dbReference>
<dbReference type="Pfam" id="PF01494">
    <property type="entry name" value="FAD_binding_3"/>
    <property type="match status" value="1"/>
</dbReference>
<dbReference type="PRINTS" id="PR00420">
    <property type="entry name" value="RNGMNOXGNASE"/>
</dbReference>
<dbReference type="SUPFAM" id="SSF51905">
    <property type="entry name" value="FAD/NAD(P)-binding domain"/>
    <property type="match status" value="1"/>
</dbReference>
<evidence type="ECO:0000255" key="1"/>
<evidence type="ECO:0000255" key="2">
    <source>
        <dbReference type="PROSITE-ProRule" id="PRU00498"/>
    </source>
</evidence>
<evidence type="ECO:0000305" key="3"/>